<evidence type="ECO:0000250" key="1">
    <source>
        <dbReference type="UniProtKB" id="Q9UKT4"/>
    </source>
</evidence>
<evidence type="ECO:0000255" key="2"/>
<evidence type="ECO:0000255" key="3">
    <source>
        <dbReference type="PROSITE-ProRule" id="PRU01220"/>
    </source>
</evidence>
<evidence type="ECO:0000269" key="4">
    <source>
    </source>
</evidence>
<evidence type="ECO:0000269" key="5">
    <source>
    </source>
</evidence>
<evidence type="ECO:0000269" key="6">
    <source>
    </source>
</evidence>
<evidence type="ECO:0000269" key="7">
    <source>
    </source>
</evidence>
<evidence type="ECO:0000303" key="8">
    <source>
    </source>
</evidence>
<evidence type="ECO:0000305" key="9"/>
<evidence type="ECO:0000312" key="10">
    <source>
        <dbReference type="EMBL" id="AAH53434.1"/>
    </source>
</evidence>
<evidence type="ECO:0000312" key="11">
    <source>
        <dbReference type="MGI" id="MGI:1914391"/>
    </source>
</evidence>
<evidence type="ECO:0007744" key="12">
    <source>
    </source>
</evidence>
<gene>
    <name evidence="11" type="primary">Fbxo5</name>
    <name evidence="8" type="synonym">Emi1</name>
</gene>
<organism>
    <name type="scientific">Mus musculus</name>
    <name type="common">Mouse</name>
    <dbReference type="NCBI Taxonomy" id="10090"/>
    <lineage>
        <taxon>Eukaryota</taxon>
        <taxon>Metazoa</taxon>
        <taxon>Chordata</taxon>
        <taxon>Craniata</taxon>
        <taxon>Vertebrata</taxon>
        <taxon>Euteleostomi</taxon>
        <taxon>Mammalia</taxon>
        <taxon>Eutheria</taxon>
        <taxon>Euarchontoglires</taxon>
        <taxon>Glires</taxon>
        <taxon>Rodentia</taxon>
        <taxon>Myomorpha</taxon>
        <taxon>Muroidea</taxon>
        <taxon>Muridae</taxon>
        <taxon>Murinae</taxon>
        <taxon>Mus</taxon>
        <taxon>Mus</taxon>
    </lineage>
</organism>
<feature type="chain" id="PRO_0000258008" description="F-box only protein 5">
    <location>
        <begin position="1"/>
        <end position="421"/>
    </location>
</feature>
<feature type="domain" description="F-box" evidence="2">
    <location>
        <begin position="223"/>
        <end position="273"/>
    </location>
</feature>
<feature type="zinc finger region" description="ZBR-type" evidence="3">
    <location>
        <begin position="348"/>
        <end position="396"/>
    </location>
</feature>
<feature type="region of interest" description="Interaction with EVI5" evidence="1">
    <location>
        <begin position="114"/>
        <end position="219"/>
    </location>
</feature>
<feature type="region of interest" description="Requires for efficient binding to CDC20" evidence="4">
    <location>
        <begin position="236"/>
        <end position="383"/>
    </location>
</feature>
<feature type="region of interest" description="Sufficient for interaction with RPS6KA2; Prevents association of CDC20 with RPS6KA2" evidence="4">
    <location>
        <begin position="236"/>
        <end position="313"/>
    </location>
</feature>
<feature type="region of interest" description="Inhibits APC ubiquitin ligase activity" evidence="1">
    <location>
        <begin position="280"/>
        <end position="421"/>
    </location>
</feature>
<feature type="region of interest" description="Competitively blocks access of APC substrates to the D-box coreceptor formed by FZR1 and ANAPC10" evidence="1">
    <location>
        <begin position="296"/>
        <end position="299"/>
    </location>
</feature>
<feature type="region of interest" description="Allows a rapid multiple mono-ubiquitination of the APC substrate, but strongly inhibits the slow ubiquitin chain elongation catalyzed by UBCH10" evidence="1">
    <location>
        <begin position="352"/>
        <end position="394"/>
    </location>
</feature>
<feature type="region of interest" description="Sufficient to suppress UBE2S activity; essential for interaction with UBE2S; competitively inhibits the rapide ubiquitin chain elongation by UBE2D1 which blocks UBE2D1 with APC; indispensable for recruitment and position of FBXO5 to the catalytic site of APC; abrogates the inhibition of ubiquitin chain assembly primarily catalyzed by UBE2S; inhibits the ubiquitination by either UBE2C or UBE2D1" evidence="1">
    <location>
        <begin position="411"/>
        <end position="421"/>
    </location>
</feature>
<feature type="binding site" evidence="3">
    <location>
        <position position="352"/>
    </location>
    <ligand>
        <name>Zn(2+)</name>
        <dbReference type="ChEBI" id="CHEBI:29105"/>
        <label>1</label>
    </ligand>
</feature>
<feature type="binding site" evidence="3">
    <location>
        <position position="355"/>
    </location>
    <ligand>
        <name>Zn(2+)</name>
        <dbReference type="ChEBI" id="CHEBI:29105"/>
        <label>1</label>
    </ligand>
</feature>
<feature type="binding site" evidence="3">
    <location>
        <position position="370"/>
    </location>
    <ligand>
        <name>Zn(2+)</name>
        <dbReference type="ChEBI" id="CHEBI:29105"/>
        <label>1</label>
    </ligand>
</feature>
<feature type="binding site" evidence="3">
    <location>
        <position position="375"/>
    </location>
    <ligand>
        <name>Zn(2+)</name>
        <dbReference type="ChEBI" id="CHEBI:29105"/>
        <label>1</label>
    </ligand>
</feature>
<feature type="binding site" evidence="3">
    <location>
        <position position="380"/>
    </location>
    <ligand>
        <name>Zn(2+)</name>
        <dbReference type="ChEBI" id="CHEBI:29105"/>
        <label>2</label>
    </ligand>
</feature>
<feature type="binding site" evidence="3">
    <location>
        <position position="383"/>
    </location>
    <ligand>
        <name>Zn(2+)</name>
        <dbReference type="ChEBI" id="CHEBI:29105"/>
        <label>2</label>
    </ligand>
</feature>
<feature type="binding site" evidence="3">
    <location>
        <position position="388"/>
    </location>
    <ligand>
        <name>Zn(2+)</name>
        <dbReference type="ChEBI" id="CHEBI:29105"/>
        <label>2</label>
    </ligand>
</feature>
<feature type="binding site" evidence="3">
    <location>
        <position position="393"/>
    </location>
    <ligand>
        <name>Zn(2+)</name>
        <dbReference type="ChEBI" id="CHEBI:29105"/>
        <label>2</label>
    </ligand>
</feature>
<feature type="modified residue" description="Phosphoserine" evidence="12">
    <location>
        <position position="85"/>
    </location>
</feature>
<feature type="mutagenesis site" description="Decreases phosphorylation by RPS6KA2." evidence="4">
    <original>S</original>
    <variation>A</variation>
    <location>
        <position position="284"/>
    </location>
</feature>
<feature type="mutagenesis site" description="Decreases phosphorylation by RPS6KA2." evidence="4">
    <original>T</original>
    <variation>A</variation>
    <location>
        <position position="289"/>
    </location>
</feature>
<feature type="mutagenesis site" description="Does not affect phosphorylation by RPS6KA2." evidence="4">
    <original>T</original>
    <variation>A</variation>
    <location>
        <position position="342"/>
    </location>
</feature>
<feature type="mutagenesis site" description="Does not affect phosphorylation by RPS6KA2." evidence="4">
    <original>S</original>
    <variation>A</variation>
    <location>
        <position position="348"/>
    </location>
</feature>
<proteinExistence type="evidence at protein level"/>
<name>FBX5_MOUSE</name>
<dbReference type="EMBL" id="BC053434">
    <property type="protein sequence ID" value="AAH53434.1"/>
    <property type="molecule type" value="mRNA"/>
</dbReference>
<dbReference type="CCDS" id="CCDS56683.1"/>
<dbReference type="RefSeq" id="NP_080271.2">
    <property type="nucleotide sequence ID" value="NM_025995.3"/>
</dbReference>
<dbReference type="SMR" id="Q7TSG3"/>
<dbReference type="BioGRID" id="211971">
    <property type="interactions" value="13"/>
</dbReference>
<dbReference type="FunCoup" id="Q7TSG3">
    <property type="interactions" value="2810"/>
</dbReference>
<dbReference type="STRING" id="10090.ENSMUSP00000019907"/>
<dbReference type="GlyGen" id="Q7TSG3">
    <property type="glycosylation" value="1 site, 1 O-linked glycan (1 site)"/>
</dbReference>
<dbReference type="iPTMnet" id="Q7TSG3"/>
<dbReference type="PhosphoSitePlus" id="Q7TSG3"/>
<dbReference type="jPOST" id="Q7TSG3"/>
<dbReference type="PaxDb" id="10090-ENSMUSP00000019907"/>
<dbReference type="PeptideAtlas" id="Q7TSG3"/>
<dbReference type="ProteomicsDB" id="272972"/>
<dbReference type="Pumba" id="Q7TSG3"/>
<dbReference type="Antibodypedia" id="33385">
    <property type="antibodies" value="246 antibodies from 30 providers"/>
</dbReference>
<dbReference type="DNASU" id="67141"/>
<dbReference type="Ensembl" id="ENSMUST00000019907.8">
    <property type="protein sequence ID" value="ENSMUSP00000019907.8"/>
    <property type="gene ID" value="ENSMUSG00000019773.8"/>
</dbReference>
<dbReference type="GeneID" id="67141"/>
<dbReference type="KEGG" id="mmu:67141"/>
<dbReference type="UCSC" id="uc007egj.1">
    <property type="organism name" value="mouse"/>
</dbReference>
<dbReference type="AGR" id="MGI:1914391"/>
<dbReference type="CTD" id="26271"/>
<dbReference type="MGI" id="MGI:1914391">
    <property type="gene designation" value="Fbxo5"/>
</dbReference>
<dbReference type="VEuPathDB" id="HostDB:ENSMUSG00000019773"/>
<dbReference type="eggNOG" id="ENOG502QPWN">
    <property type="taxonomic scope" value="Eukaryota"/>
</dbReference>
<dbReference type="GeneTree" id="ENSGT00530000063692"/>
<dbReference type="HOGENOM" id="CLU_055946_0_0_1"/>
<dbReference type="InParanoid" id="Q7TSG3"/>
<dbReference type="OMA" id="VVLSCMQ"/>
<dbReference type="OrthoDB" id="9984940at2759"/>
<dbReference type="PhylomeDB" id="Q7TSG3"/>
<dbReference type="TreeFam" id="TF101170"/>
<dbReference type="Reactome" id="R-MMU-174113">
    <property type="pathway name" value="SCF-beta-TrCP mediated degradation of Emi1"/>
</dbReference>
<dbReference type="Reactome" id="R-MMU-176408">
    <property type="pathway name" value="Regulation of APC/C activators between G1/S and early anaphase"/>
</dbReference>
<dbReference type="Reactome" id="R-MMU-176417">
    <property type="pathway name" value="Phosphorylation of Emi1"/>
</dbReference>
<dbReference type="Reactome" id="R-MMU-68881">
    <property type="pathway name" value="Mitotic Metaphase/Anaphase Transition"/>
</dbReference>
<dbReference type="UniPathway" id="UPA00143"/>
<dbReference type="BioGRID-ORCS" id="67141">
    <property type="hits" value="26 hits in 77 CRISPR screens"/>
</dbReference>
<dbReference type="ChiTaRS" id="Fbxo5">
    <property type="organism name" value="mouse"/>
</dbReference>
<dbReference type="PRO" id="PR:Q7TSG3"/>
<dbReference type="Proteomes" id="UP000000589">
    <property type="component" value="Chromosome 10"/>
</dbReference>
<dbReference type="RNAct" id="Q7TSG3">
    <property type="molecule type" value="protein"/>
</dbReference>
<dbReference type="Bgee" id="ENSMUSG00000019773">
    <property type="expression patterns" value="Expressed in dorsal pancreas and 193 other cell types or tissues"/>
</dbReference>
<dbReference type="GO" id="GO:0005737">
    <property type="term" value="C:cytoplasm"/>
    <property type="evidence" value="ECO:0000314"/>
    <property type="project" value="MGI"/>
</dbReference>
<dbReference type="GO" id="GO:0072687">
    <property type="term" value="C:meiotic spindle"/>
    <property type="evidence" value="ECO:0000314"/>
    <property type="project" value="UniProtKB"/>
</dbReference>
<dbReference type="GO" id="GO:0005654">
    <property type="term" value="C:nucleoplasm"/>
    <property type="evidence" value="ECO:0007669"/>
    <property type="project" value="Ensembl"/>
</dbReference>
<dbReference type="GO" id="GO:0005634">
    <property type="term" value="C:nucleus"/>
    <property type="evidence" value="ECO:0000250"/>
    <property type="project" value="UniProtKB"/>
</dbReference>
<dbReference type="GO" id="GO:0005819">
    <property type="term" value="C:spindle"/>
    <property type="evidence" value="ECO:0000250"/>
    <property type="project" value="UniProtKB"/>
</dbReference>
<dbReference type="GO" id="GO:0010997">
    <property type="term" value="F:anaphase-promoting complex binding"/>
    <property type="evidence" value="ECO:0000250"/>
    <property type="project" value="UniProtKB"/>
</dbReference>
<dbReference type="GO" id="GO:0019901">
    <property type="term" value="F:protein kinase binding"/>
    <property type="evidence" value="ECO:0007669"/>
    <property type="project" value="Ensembl"/>
</dbReference>
<dbReference type="GO" id="GO:1990948">
    <property type="term" value="F:ubiquitin ligase inhibitor activity"/>
    <property type="evidence" value="ECO:0000250"/>
    <property type="project" value="UniProtKB"/>
</dbReference>
<dbReference type="GO" id="GO:0008270">
    <property type="term" value="F:zinc ion binding"/>
    <property type="evidence" value="ECO:0007669"/>
    <property type="project" value="UniProtKB-KW"/>
</dbReference>
<dbReference type="GO" id="GO:0051301">
    <property type="term" value="P:cell division"/>
    <property type="evidence" value="ECO:0007669"/>
    <property type="project" value="UniProtKB-KW"/>
</dbReference>
<dbReference type="GO" id="GO:0006974">
    <property type="term" value="P:DNA damage response"/>
    <property type="evidence" value="ECO:0000250"/>
    <property type="project" value="UniProtKB"/>
</dbReference>
<dbReference type="GO" id="GO:0046785">
    <property type="term" value="P:microtubule polymerization"/>
    <property type="evidence" value="ECO:0000314"/>
    <property type="project" value="MGI"/>
</dbReference>
<dbReference type="GO" id="GO:2000773">
    <property type="term" value="P:negative regulation of cellular senescence"/>
    <property type="evidence" value="ECO:0000250"/>
    <property type="project" value="UniProtKB"/>
</dbReference>
<dbReference type="GO" id="GO:0032876">
    <property type="term" value="P:negative regulation of DNA endoreduplication"/>
    <property type="evidence" value="ECO:0000250"/>
    <property type="project" value="UniProtKB"/>
</dbReference>
<dbReference type="GO" id="GO:0045835">
    <property type="term" value="P:negative regulation of meiotic nuclear division"/>
    <property type="evidence" value="ECO:0000314"/>
    <property type="project" value="MGI"/>
</dbReference>
<dbReference type="GO" id="GO:0045841">
    <property type="term" value="P:negative regulation of mitotic metaphase/anaphase transition"/>
    <property type="evidence" value="ECO:0007669"/>
    <property type="project" value="Ensembl"/>
</dbReference>
<dbReference type="GO" id="GO:1904667">
    <property type="term" value="P:negative regulation of ubiquitin protein ligase activity"/>
    <property type="evidence" value="ECO:0000250"/>
    <property type="project" value="UniProtKB"/>
</dbReference>
<dbReference type="GO" id="GO:0051444">
    <property type="term" value="P:negative regulation of ubiquitin-protein transferase activity"/>
    <property type="evidence" value="ECO:0000250"/>
    <property type="project" value="UniProtKB"/>
</dbReference>
<dbReference type="GO" id="GO:0001556">
    <property type="term" value="P:oocyte maturation"/>
    <property type="evidence" value="ECO:0000314"/>
    <property type="project" value="MGI"/>
</dbReference>
<dbReference type="GO" id="GO:0070169">
    <property type="term" value="P:positive regulation of biomineral tissue development"/>
    <property type="evidence" value="ECO:0000250"/>
    <property type="project" value="UniProtKB"/>
</dbReference>
<dbReference type="GO" id="GO:0008284">
    <property type="term" value="P:positive regulation of cell population proliferation"/>
    <property type="evidence" value="ECO:0007669"/>
    <property type="project" value="Ensembl"/>
</dbReference>
<dbReference type="GO" id="GO:0010971">
    <property type="term" value="P:positive regulation of G2/M transition of mitotic cell cycle"/>
    <property type="evidence" value="ECO:0000250"/>
    <property type="project" value="UniProtKB"/>
</dbReference>
<dbReference type="GO" id="GO:0060903">
    <property type="term" value="P:positive regulation of meiosis I"/>
    <property type="evidence" value="ECO:0000266"/>
    <property type="project" value="MGI"/>
</dbReference>
<dbReference type="GO" id="GO:1905322">
    <property type="term" value="P:positive regulation of mesenchymal stem cell migration"/>
    <property type="evidence" value="ECO:0000250"/>
    <property type="project" value="UniProtKB"/>
</dbReference>
<dbReference type="GO" id="GO:0045669">
    <property type="term" value="P:positive regulation of osteoblast differentiation"/>
    <property type="evidence" value="ECO:0000250"/>
    <property type="project" value="UniProtKB"/>
</dbReference>
<dbReference type="GO" id="GO:0016567">
    <property type="term" value="P:protein ubiquitination"/>
    <property type="evidence" value="ECO:0007669"/>
    <property type="project" value="UniProtKB-UniPathway"/>
</dbReference>
<dbReference type="GO" id="GO:0006275">
    <property type="term" value="P:regulation of DNA replication"/>
    <property type="evidence" value="ECO:0000250"/>
    <property type="project" value="UniProtKB"/>
</dbReference>
<dbReference type="GO" id="GO:0040020">
    <property type="term" value="P:regulation of meiotic nuclear division"/>
    <property type="evidence" value="ECO:0000314"/>
    <property type="project" value="MGI"/>
</dbReference>
<dbReference type="GO" id="GO:0007346">
    <property type="term" value="P:regulation of mitotic cell cycle"/>
    <property type="evidence" value="ECO:0000315"/>
    <property type="project" value="UniProtKB"/>
</dbReference>
<dbReference type="GO" id="GO:0051225">
    <property type="term" value="P:spindle assembly"/>
    <property type="evidence" value="ECO:0000314"/>
    <property type="project" value="MGI"/>
</dbReference>
<dbReference type="GO" id="GO:0007057">
    <property type="term" value="P:spindle assembly involved in female meiosis I"/>
    <property type="evidence" value="ECO:0000314"/>
    <property type="project" value="MGI"/>
</dbReference>
<dbReference type="GO" id="GO:0016050">
    <property type="term" value="P:vesicle organization"/>
    <property type="evidence" value="ECO:0000314"/>
    <property type="project" value="MGI"/>
</dbReference>
<dbReference type="CDD" id="cd20364">
    <property type="entry name" value="BRcat_RBR_FBXO5"/>
    <property type="match status" value="1"/>
</dbReference>
<dbReference type="FunFam" id="2.20.25.20:FF:000006">
    <property type="entry name" value="F-box only protein 5"/>
    <property type="match status" value="1"/>
</dbReference>
<dbReference type="Gene3D" id="1.20.1280.50">
    <property type="match status" value="1"/>
</dbReference>
<dbReference type="Gene3D" id="2.20.25.20">
    <property type="match status" value="1"/>
</dbReference>
<dbReference type="InterPro" id="IPR036047">
    <property type="entry name" value="F-box-like_dom_sf"/>
</dbReference>
<dbReference type="InterPro" id="IPR001810">
    <property type="entry name" value="F-box_dom"/>
</dbReference>
<dbReference type="InterPro" id="IPR047147">
    <property type="entry name" value="FBX5_43"/>
</dbReference>
<dbReference type="InterPro" id="IPR044064">
    <property type="entry name" value="ZF_ZBR"/>
</dbReference>
<dbReference type="PANTHER" id="PTHR15493:SF8">
    <property type="entry name" value="F-BOX ONLY PROTEIN 5"/>
    <property type="match status" value="1"/>
</dbReference>
<dbReference type="PANTHER" id="PTHR15493">
    <property type="entry name" value="F-BOX ONLY PROTEIN 5 AND 43"/>
    <property type="match status" value="1"/>
</dbReference>
<dbReference type="Pfam" id="PF00646">
    <property type="entry name" value="F-box"/>
    <property type="match status" value="1"/>
</dbReference>
<dbReference type="Pfam" id="PF22191">
    <property type="entry name" value="IBR_1"/>
    <property type="match status" value="1"/>
</dbReference>
<dbReference type="SUPFAM" id="SSF81383">
    <property type="entry name" value="F-box domain"/>
    <property type="match status" value="1"/>
</dbReference>
<dbReference type="PROSITE" id="PS51872">
    <property type="entry name" value="ZF_ZBR"/>
    <property type="match status" value="1"/>
</dbReference>
<keyword id="KW-0131">Cell cycle</keyword>
<keyword id="KW-0132">Cell division</keyword>
<keyword id="KW-0963">Cytoplasm</keyword>
<keyword id="KW-0206">Cytoskeleton</keyword>
<keyword id="KW-0479">Metal-binding</keyword>
<keyword id="KW-0498">Mitosis</keyword>
<keyword id="KW-0539">Nucleus</keyword>
<keyword id="KW-0597">Phosphoprotein</keyword>
<keyword id="KW-1185">Reference proteome</keyword>
<keyword id="KW-0832">Ubl conjugation</keyword>
<keyword id="KW-0833">Ubl conjugation pathway</keyword>
<keyword id="KW-0862">Zinc</keyword>
<keyword id="KW-0863">Zinc-finger</keyword>
<reference evidence="10" key="1">
    <citation type="journal article" date="2004" name="Genome Res.">
        <title>The status, quality, and expansion of the NIH full-length cDNA project: the Mammalian Gene Collection (MGC).</title>
        <authorList>
            <consortium name="The MGC Project Team"/>
        </authorList>
    </citation>
    <scope>NUCLEOTIDE SEQUENCE [LARGE SCALE MRNA]</scope>
    <source>
        <tissue evidence="10">Embryo</tissue>
    </source>
</reference>
<reference key="2">
    <citation type="journal article" date="2004" name="EMBO J.">
        <title>Functional interaction between p90Rsk2 and Emi1 contributes to the metaphase arrest of mouse oocytes.</title>
        <authorList>
            <person name="Paronetto M.P."/>
            <person name="Giorda E."/>
            <person name="Carsetti R."/>
            <person name="Rossi P."/>
            <person name="Geremia R."/>
            <person name="Sette C."/>
        </authorList>
    </citation>
    <scope>INTERACTION WITH RPS6KA2 AND CDC20</scope>
    <scope>TISSUE SPECIFICITY</scope>
    <scope>SUBCELLULAR LOCATION</scope>
    <scope>REGION</scope>
    <scope>PHOSPHORYLATION</scope>
    <scope>MUTAGENESIS OF SER-284; THR-289; THR-342 AND SER-348</scope>
    <scope>FUNCTION</scope>
</reference>
<reference key="3">
    <citation type="journal article" date="2006" name="Mol. Cell. Biol.">
        <title>Mouse emi1 has an essential function in mitotic progression during early embryogenesis.</title>
        <authorList>
            <person name="Lee H."/>
            <person name="Lee D.J."/>
            <person name="Oh S.P."/>
            <person name="Park H.D."/>
            <person name="Nam H.H."/>
            <person name="Kim J.M."/>
            <person name="Lim D.-S."/>
        </authorList>
    </citation>
    <scope>FUNCTION</scope>
    <scope>DISRUPTION PHENOTYPE</scope>
</reference>
<reference key="4">
    <citation type="journal article" date="2007" name="J. Cell Biol.">
        <title>Prophase I arrest and progression to metaphase I in mouse oocytes are controlled by Emi1-dependent regulation of APC(Cdh1).</title>
        <authorList>
            <person name="Marangos P."/>
            <person name="Verschuren E.W."/>
            <person name="Chen R."/>
            <person name="Jackson P.K."/>
            <person name="Carroll J."/>
        </authorList>
    </citation>
    <scope>TISSUE SPECIFICITY</scope>
    <scope>DEVELOPMENTAL STAGE</scope>
    <scope>PROTEOLYSIS DEGRADATION</scope>
    <scope>FUNCTION</scope>
</reference>
<reference key="5">
    <citation type="journal article" date="2007" name="Mol. Cell. Biol.">
        <title>Loss of Emi1-dependent anaphase-promoting complex/cyclosome inhibition deregulates E2F target expression and elicits DNA damage-induced senescence.</title>
        <authorList>
            <person name="Verschuren E.W."/>
            <person name="Ban K.H."/>
            <person name="Masek M.A."/>
            <person name="Lehman N.L."/>
            <person name="Jackson P.K."/>
        </authorList>
    </citation>
    <scope>TISSUE SPECIFICITY</scope>
</reference>
<reference key="6">
    <citation type="journal article" date="2010" name="Cell">
        <title>A tissue-specific atlas of mouse protein phosphorylation and expression.</title>
        <authorList>
            <person name="Huttlin E.L."/>
            <person name="Jedrychowski M.P."/>
            <person name="Elias J.E."/>
            <person name="Goswami T."/>
            <person name="Rad R."/>
            <person name="Beausoleil S.A."/>
            <person name="Villen J."/>
            <person name="Haas W."/>
            <person name="Sowa M.E."/>
            <person name="Gygi S.P."/>
        </authorList>
    </citation>
    <scope>PHOSPHORYLATION [LARGE SCALE ANALYSIS] AT SER-85</scope>
    <scope>IDENTIFICATION BY MASS SPECTROMETRY [LARGE SCALE ANALYSIS]</scope>
    <source>
        <tissue>Spleen</tissue>
    </source>
</reference>
<comment type="function">
    <text evidence="1 4 5 6">Regulator of APC activity during mitotic and meiotic cell cycle (PubMed:15526037, PubMed:16809773, PubMed:17190794). During mitotic cell cycle plays a role as both substrate and inhibitor of APC-FZR1 complex (PubMed:16809773). During G1 phase, plays a role as substrate of APC-FZR1 complex E3 ligase. Then switches as an inhibitor of APC-FZR1 complex during S and G2 leading to cell-cycle commitment. As APC inhibitor, prevents the degradation of APC substrates at multiple levels: by interacting with APC and blocking access of APC substrates to the D-box co-receptor, formed by FZR1 and ANAPC10; by suppressing ubiquitin ligation and chain elongation by APC by preventing the UBE2C and UBE2S activities. Plays a role in genome integrity preservation by coordinating DNA replication with mitosis through APC inhibition in interphase to stabilize CCNA2 and GMNN in order to promote mitosis and prevent rereplication and DNA damage-induced cellular senescence (By similarity). During oocyte maturation, plays a role in meiosis through inactivation of APC-FZR1 complex. Inhibits APC through RPS6KA2 interaction that increases FBXO5 affiniy for CDC20 leading to the metaphase arrest of the second meiotic division before fertilization (PubMed:15526037). Controls entry into the first meiotic division through inactivation of APC-FZR1 complex (PubMed:17190794). Promotes migration and osteogenic differentiation of mesenchymal stem cells (By similarity).</text>
</comment>
<comment type="pathway">
    <text>Protein modification; protein ubiquitination.</text>
</comment>
<comment type="subunit">
    <text evidence="1 4">Part of a SCF (SKP1-cullin-F-box) protein ligase complex. Interacts with BTRC; mediates proteolysis by the SCF ubiquitin ligase complex leading to activation of APC in late mitosis and subsequent mitotic progression. Interacts with FZR1/CDH1 and the N-terminal substrate-binding domain of CDC20; prevents APC activation. Also interacts with EVI5 which blocks its phosphorylation by PLK1 and prevents its subsequent binding to BTRC and degradation. Interacts simultaneously with anaphase promoting complex (APC), through at least ANAPC2, CDC23, CDC27, the APC substrate GMNN and the APC activator FZR1. Interacts with UBE2S; interferes with the activity of UBE2S mainly by disrupting the dynamic electrostatic association between the C-terminal tail of UBE2S and ANAPC2 (By similarity). Interacts with RPS6KA2; cooperates to induce the metaphase arrest of early blastomeres; increases and stabilizes interaction of FBXO5 with CDC20 (PubMed:15526037).</text>
</comment>
<comment type="subcellular location">
    <subcellularLocation>
        <location evidence="1">Nucleus</location>
    </subcellularLocation>
    <subcellularLocation>
        <location evidence="4">Cytoplasm</location>
    </subcellularLocation>
    <subcellularLocation>
        <location evidence="4">Cytoplasm</location>
        <location evidence="4">Cytoskeleton</location>
        <location evidence="4">Spindle</location>
    </subcellularLocation>
    <text evidence="1">In interphase, localizes in a punctate manner in the nucleus and cytoplasm with some perinuclear concentration. In mitotic cells, localizes throughout the cell, particularly at the spindle.</text>
</comment>
<comment type="tissue specificity">
    <text evidence="4 6 7">Expressed in oocytes and granulosa cells (PubMed:15526037, PubMed:17190794). Expressed in proliferating cells compartments in hair follicle and skin epidermis, spermatogonia, and intestinal crypts (PubMed:17875940).</text>
</comment>
<comment type="developmental stage">
    <text evidence="6">Detected at the germinal vesicle (GV) stage. During maturation, decreases to barely detectable levels in meiosis I- and meiosis II-stage oocytes.</text>
</comment>
<comment type="PTM">
    <text evidence="1 4">Phosphorylation by CDK2 and subsequently by PLK1 triggers degradation during early mitosis through ubiquitin-mediated proteolysis by the SCF ubiquitin ligase complex containing the F-box protein BTRC. This degradation is necessary for the activation of APC in late mitosis and subsequent mitotic progression (By similarity). Phosphorylated by RPS6KA2; increases and stabilizes interaction with CDC20 (PubMed:15526037).</text>
</comment>
<comment type="PTM">
    <text evidence="1 6">Ubiquitinated by the SCF(BTRC) complex following phosphorylation by PLK1. Undergoes both 'Lys-11' and 'Lys-48'-linked polyubiquitination by APC-FZR1 complex leading to degradation during G1 phase by the proteasome (By similarity). Degraded through the SCF(BTRC) complex; degradation occurs during oocyte maturation, between germinal vesicle breakdown (GVBD) and meiosis I, and is required for the meiosis I-meiosis II transition (PubMed:17190794).</text>
</comment>
<comment type="disruption phenotype">
    <text evidence="5">Death at the preimplantation stage. Embryos display normal cell proliferation but mitotic progression is severely defective during embryonic cleavage with multipolar spindles and misaligned chromosomes frequently observed.</text>
</comment>
<protein>
    <recommendedName>
        <fullName evidence="9">F-box only protein 5</fullName>
    </recommendedName>
    <alternativeName>
        <fullName evidence="1">Early mitotic inhibitor 1</fullName>
    </alternativeName>
</protein>
<sequence length="421" mass="47508">MSRRTCSDLRRPSSCPCRLGARTTVDGCKEESPVLSVTMKCFNCNPDLSELEVVKPEDSGIEASYSPVCLEPSCNDCVRNHERLSFIDSPIVGHDNKENQRVQNTLDSSNETEELEASRLYEDSGYSSFTQSDRDDGILILENFRNSPQARLLPSQSPDQHPNKTLLPVLHFERVVCSTLKKNGKRNPKVDREMLKEVIASGNFRLQNIIGKKMGLEHLDILAELSRRGFVHLLANILTKLSGMDLVNLSKVSRIWKKILENNKGAFQLYSKTMQRVIESSKLSLHATTRGYVVGRAALTCVQKSSTWAPPKKDVQIKSSSQRGQRVSTYSRHNEFVEVAKTLKNNESLKACVRCNFPAKYDHYLERAVCKRESCQFEYCTKCLCAYHNNKDCLNGKILKASCKVGPLPGTKKSKKNLQRL</sequence>
<accession>Q7TSG3</accession>